<accession>Q3EDA9</accession>
<comment type="similarity">
    <text evidence="1">Belongs to the PPR family. P subfamily.</text>
</comment>
<comment type="online information" name="Pentatricopeptide repeat proteins">
    <link uri="https://ppr.plantenergy.uwa.edu.au"/>
</comment>
<evidence type="ECO:0000305" key="1"/>
<gene>
    <name type="ordered locus">At1g16830</name>
    <name type="ORF">F17F16.24</name>
</gene>
<organism>
    <name type="scientific">Arabidopsis thaliana</name>
    <name type="common">Mouse-ear cress</name>
    <dbReference type="NCBI Taxonomy" id="3702"/>
    <lineage>
        <taxon>Eukaryota</taxon>
        <taxon>Viridiplantae</taxon>
        <taxon>Streptophyta</taxon>
        <taxon>Embryophyta</taxon>
        <taxon>Tracheophyta</taxon>
        <taxon>Spermatophyta</taxon>
        <taxon>Magnoliopsida</taxon>
        <taxon>eudicotyledons</taxon>
        <taxon>Gunneridae</taxon>
        <taxon>Pentapetalae</taxon>
        <taxon>rosids</taxon>
        <taxon>malvids</taxon>
        <taxon>Brassicales</taxon>
        <taxon>Brassicaceae</taxon>
        <taxon>Camelineae</taxon>
        <taxon>Arabidopsis</taxon>
    </lineage>
</organism>
<reference key="1">
    <citation type="journal article" date="2000" name="Nature">
        <title>Sequence and analysis of chromosome 1 of the plant Arabidopsis thaliana.</title>
        <authorList>
            <person name="Theologis A."/>
            <person name="Ecker J.R."/>
            <person name="Palm C.J."/>
            <person name="Federspiel N.A."/>
            <person name="Kaul S."/>
            <person name="White O."/>
            <person name="Alonso J."/>
            <person name="Altafi H."/>
            <person name="Araujo R."/>
            <person name="Bowman C.L."/>
            <person name="Brooks S.Y."/>
            <person name="Buehler E."/>
            <person name="Chan A."/>
            <person name="Chao Q."/>
            <person name="Chen H."/>
            <person name="Cheuk R.F."/>
            <person name="Chin C.W."/>
            <person name="Chung M.K."/>
            <person name="Conn L."/>
            <person name="Conway A.B."/>
            <person name="Conway A.R."/>
            <person name="Creasy T.H."/>
            <person name="Dewar K."/>
            <person name="Dunn P."/>
            <person name="Etgu P."/>
            <person name="Feldblyum T.V."/>
            <person name="Feng J.-D."/>
            <person name="Fong B."/>
            <person name="Fujii C.Y."/>
            <person name="Gill J.E."/>
            <person name="Goldsmith A.D."/>
            <person name="Haas B."/>
            <person name="Hansen N.F."/>
            <person name="Hughes B."/>
            <person name="Huizar L."/>
            <person name="Hunter J.L."/>
            <person name="Jenkins J."/>
            <person name="Johnson-Hopson C."/>
            <person name="Khan S."/>
            <person name="Khaykin E."/>
            <person name="Kim C.J."/>
            <person name="Koo H.L."/>
            <person name="Kremenetskaia I."/>
            <person name="Kurtz D.B."/>
            <person name="Kwan A."/>
            <person name="Lam B."/>
            <person name="Langin-Hooper S."/>
            <person name="Lee A."/>
            <person name="Lee J.M."/>
            <person name="Lenz C.A."/>
            <person name="Li J.H."/>
            <person name="Li Y.-P."/>
            <person name="Lin X."/>
            <person name="Liu S.X."/>
            <person name="Liu Z.A."/>
            <person name="Luros J.S."/>
            <person name="Maiti R."/>
            <person name="Marziali A."/>
            <person name="Militscher J."/>
            <person name="Miranda M."/>
            <person name="Nguyen M."/>
            <person name="Nierman W.C."/>
            <person name="Osborne B.I."/>
            <person name="Pai G."/>
            <person name="Peterson J."/>
            <person name="Pham P.K."/>
            <person name="Rizzo M."/>
            <person name="Rooney T."/>
            <person name="Rowley D."/>
            <person name="Sakano H."/>
            <person name="Salzberg S.L."/>
            <person name="Schwartz J.R."/>
            <person name="Shinn P."/>
            <person name="Southwick A.M."/>
            <person name="Sun H."/>
            <person name="Tallon L.J."/>
            <person name="Tambunga G."/>
            <person name="Toriumi M.J."/>
            <person name="Town C.D."/>
            <person name="Utterback T."/>
            <person name="Van Aken S."/>
            <person name="Vaysberg M."/>
            <person name="Vysotskaia V.S."/>
            <person name="Walker M."/>
            <person name="Wu D."/>
            <person name="Yu G."/>
            <person name="Fraser C.M."/>
            <person name="Venter J.C."/>
            <person name="Davis R.W."/>
        </authorList>
    </citation>
    <scope>NUCLEOTIDE SEQUENCE [LARGE SCALE GENOMIC DNA]</scope>
    <source>
        <strain>cv. Columbia</strain>
    </source>
</reference>
<reference key="2">
    <citation type="journal article" date="2017" name="Plant J.">
        <title>Araport11: a complete reannotation of the Arabidopsis thaliana reference genome.</title>
        <authorList>
            <person name="Cheng C.Y."/>
            <person name="Krishnakumar V."/>
            <person name="Chan A.P."/>
            <person name="Thibaud-Nissen F."/>
            <person name="Schobel S."/>
            <person name="Town C.D."/>
        </authorList>
    </citation>
    <scope>GENOME REANNOTATION</scope>
    <source>
        <strain>cv. Columbia</strain>
    </source>
</reference>
<reference key="3">
    <citation type="journal article" date="2004" name="Plant Cell">
        <title>Genome-wide analysis of Arabidopsis pentatricopeptide repeat proteins reveals their essential role in organelle biogenesis.</title>
        <authorList>
            <person name="Lurin C."/>
            <person name="Andres C."/>
            <person name="Aubourg S."/>
            <person name="Bellaoui M."/>
            <person name="Bitton F."/>
            <person name="Bruyere C."/>
            <person name="Caboche M."/>
            <person name="Debast C."/>
            <person name="Gualberto J."/>
            <person name="Hoffmann B."/>
            <person name="Lecharny A."/>
            <person name="Le Ret M."/>
            <person name="Martin-Magniette M.-L."/>
            <person name="Mireau H."/>
            <person name="Peeters N."/>
            <person name="Renou J.-P."/>
            <person name="Szurek B."/>
            <person name="Taconnat L."/>
            <person name="Small I."/>
        </authorList>
    </citation>
    <scope>GENE FAMILY</scope>
</reference>
<sequence>MLWRCNWVKQRKRILNTLSFSSIHGQYPREYTAAKPLTHDNVYSCLRESPADLKTLNFFFWCAKQNNYFHDDRAFDHMVGVVEKLTREYYSIDRIIERLKISGCEIKPRVFLLLLEIFWRGHIYDKAIEVYTGMSSFGFVPNTRAMNMMMDVNFKLNVVNGALEIFEGIRFRNFFSFDIALSHFCSRGGRGDLVGVKIVLKRMIGEGFYPNRERFGQILRLCCRTGCVSEAFQVVGLMICSGISVSVNVWSMLVSGFFRSGEPQKAVDLFNKMIQIGCSPNLVTYTSLIKGFVDLGMVDEAFTVLSKVQSEGLAPDIVLCNLMIHTYTRLGRFEEARKVFTSLEKRKLVPDQYTFASILSSLCLSGKFDLVPRITHGIGTDFDLVTGNLLSNCFSKIGYNSYALKVLSIMSYKDFALDCYTYTVYLSALCRGGAPRAAIKMYKIIIKEKKHLDAHFHSAIIDSLIELGKYNTAVHLFKRCILEKYPLDVVSYTVAIKGLVRAKRIEEAYSLCCDMKEGGIYPNRRTYRTIISGLCKEKETEKVRKILRECIQEGVELDPNTKFQVYSLLSRYRGDFSEFRSVFEKWKSEFTENVDVSDSDDELFVSVG</sequence>
<keyword id="KW-1185">Reference proteome</keyword>
<keyword id="KW-0677">Repeat</keyword>
<feature type="chain" id="PRO_0000342787" description="Putative pentatricopeptide repeat-containing protein At1g16830">
    <location>
        <begin position="1"/>
        <end position="608"/>
    </location>
</feature>
<feature type="repeat" description="PPR 1">
    <location>
        <begin position="107"/>
        <end position="141"/>
    </location>
</feature>
<feature type="repeat" description="PPR 2">
    <location>
        <begin position="142"/>
        <end position="172"/>
    </location>
</feature>
<feature type="repeat" description="PPR 3">
    <location>
        <begin position="173"/>
        <end position="210"/>
    </location>
</feature>
<feature type="repeat" description="PPR 4">
    <location>
        <begin position="211"/>
        <end position="245"/>
    </location>
</feature>
<feature type="repeat" description="PPR 5">
    <location>
        <begin position="246"/>
        <end position="280"/>
    </location>
</feature>
<feature type="repeat" description="PPR 6">
    <location>
        <begin position="281"/>
        <end position="315"/>
    </location>
</feature>
<feature type="repeat" description="PPR 7">
    <location>
        <begin position="316"/>
        <end position="350"/>
    </location>
</feature>
<feature type="repeat" description="PPR 8">
    <location>
        <begin position="351"/>
        <end position="381"/>
    </location>
</feature>
<feature type="repeat" description="PPR 9">
    <location>
        <begin position="383"/>
        <end position="417"/>
    </location>
</feature>
<feature type="repeat" description="PPR 10">
    <location>
        <begin position="418"/>
        <end position="452"/>
    </location>
</feature>
<feature type="repeat" description="PPR 11">
    <location>
        <begin position="453"/>
        <end position="487"/>
    </location>
</feature>
<feature type="repeat" description="PPR 12">
    <location>
        <begin position="488"/>
        <end position="522"/>
    </location>
</feature>
<feature type="repeat" description="PPR 13">
    <location>
        <begin position="523"/>
        <end position="557"/>
    </location>
</feature>
<protein>
    <recommendedName>
        <fullName>Putative pentatricopeptide repeat-containing protein At1g16830</fullName>
    </recommendedName>
</protein>
<dbReference type="EMBL" id="AC026237">
    <property type="status" value="NOT_ANNOTATED_CDS"/>
    <property type="molecule type" value="Genomic_DNA"/>
</dbReference>
<dbReference type="EMBL" id="CP002684">
    <property type="protein sequence ID" value="AEE29504.1"/>
    <property type="molecule type" value="Genomic_DNA"/>
</dbReference>
<dbReference type="RefSeq" id="NP_173127.4">
    <property type="nucleotide sequence ID" value="NM_101544.5"/>
</dbReference>
<dbReference type="SMR" id="Q3EDA9"/>
<dbReference type="FunCoup" id="Q3EDA9">
    <property type="interactions" value="164"/>
</dbReference>
<dbReference type="STRING" id="3702.Q3EDA9"/>
<dbReference type="iPTMnet" id="Q3EDA9"/>
<dbReference type="PaxDb" id="3702-AT1G16830.1"/>
<dbReference type="EnsemblPlants" id="AT1G16830.1">
    <property type="protein sequence ID" value="AT1G16830.1"/>
    <property type="gene ID" value="AT1G16830"/>
</dbReference>
<dbReference type="GeneID" id="838254"/>
<dbReference type="Gramene" id="AT1G16830.1">
    <property type="protein sequence ID" value="AT1G16830.1"/>
    <property type="gene ID" value="AT1G16830"/>
</dbReference>
<dbReference type="KEGG" id="ath:AT1G16830"/>
<dbReference type="Araport" id="AT1G16830"/>
<dbReference type="TAIR" id="AT1G16830"/>
<dbReference type="eggNOG" id="KOG4197">
    <property type="taxonomic scope" value="Eukaryota"/>
</dbReference>
<dbReference type="HOGENOM" id="CLU_002706_49_17_1"/>
<dbReference type="InParanoid" id="Q3EDA9"/>
<dbReference type="OMA" id="RAFDHMV"/>
<dbReference type="OrthoDB" id="185373at2759"/>
<dbReference type="PhylomeDB" id="Q3EDA9"/>
<dbReference type="PRO" id="PR:Q3EDA9"/>
<dbReference type="Proteomes" id="UP000006548">
    <property type="component" value="Chromosome 1"/>
</dbReference>
<dbReference type="ExpressionAtlas" id="Q3EDA9">
    <property type="expression patterns" value="baseline and differential"/>
</dbReference>
<dbReference type="Gene3D" id="1.25.40.10">
    <property type="entry name" value="Tetratricopeptide repeat domain"/>
    <property type="match status" value="4"/>
</dbReference>
<dbReference type="InterPro" id="IPR002885">
    <property type="entry name" value="Pentatricopeptide_rpt"/>
</dbReference>
<dbReference type="InterPro" id="IPR050872">
    <property type="entry name" value="PPR_P_subfamily"/>
</dbReference>
<dbReference type="InterPro" id="IPR011990">
    <property type="entry name" value="TPR-like_helical_dom_sf"/>
</dbReference>
<dbReference type="NCBIfam" id="TIGR00756">
    <property type="entry name" value="PPR"/>
    <property type="match status" value="6"/>
</dbReference>
<dbReference type="PANTHER" id="PTHR46128">
    <property type="entry name" value="MITOCHONDRIAL GROUP I INTRON SPLICING FACTOR CCM1"/>
    <property type="match status" value="1"/>
</dbReference>
<dbReference type="PANTHER" id="PTHR46128:SF121">
    <property type="entry name" value="PENTACOTRIPEPTIDE-REPEAT REGION OF PRORP DOMAIN-CONTAINING PROTEIN"/>
    <property type="match status" value="1"/>
</dbReference>
<dbReference type="Pfam" id="PF01535">
    <property type="entry name" value="PPR"/>
    <property type="match status" value="2"/>
</dbReference>
<dbReference type="Pfam" id="PF13041">
    <property type="entry name" value="PPR_2"/>
    <property type="match status" value="3"/>
</dbReference>
<dbReference type="SUPFAM" id="SSF48452">
    <property type="entry name" value="TPR-like"/>
    <property type="match status" value="1"/>
</dbReference>
<dbReference type="PROSITE" id="PS51375">
    <property type="entry name" value="PPR"/>
    <property type="match status" value="13"/>
</dbReference>
<name>PPR46_ARATH</name>
<proteinExistence type="inferred from homology"/>